<reference key="1">
    <citation type="journal article" date="2002" name="J. Biol. Chem.">
        <title>Identification and molecular characterization of two closely related G protein-coupled receptors activated by prokineticins/endocrine gland vascular endothelial growth factor.</title>
        <authorList>
            <person name="Lin D.C.-H."/>
            <person name="Bullock C.M."/>
            <person name="Ehlert F.J."/>
            <person name="Chen J.-L."/>
            <person name="Tian H."/>
            <person name="Zhou Q.-Y."/>
        </authorList>
    </citation>
    <scope>NUCLEOTIDE SEQUENCE [MRNA]</scope>
</reference>
<reference key="2">
    <citation type="journal article" date="2002" name="Biochim. Biophys. Acta">
        <title>Molecular cloning and characterization of prokineticin receptors.</title>
        <authorList>
            <person name="Soga T."/>
            <person name="Matsumoto S."/>
            <person name="Oda T."/>
            <person name="Saito T."/>
            <person name="Hiyama H."/>
            <person name="Takasaki J."/>
            <person name="Kamohara M."/>
            <person name="Ohishi T."/>
            <person name="Matsushime H."/>
            <person name="Furuichi K."/>
        </authorList>
    </citation>
    <scope>NUCLEOTIDE SEQUENCE [MRNA]</scope>
</reference>
<reference key="3">
    <citation type="submission" date="2007-04" db="EMBL/GenBank/DDBJ databases">
        <authorList>
            <person name="Martin A.L."/>
            <person name="Kaighin V.A."/>
            <person name="Aronstam R.S."/>
        </authorList>
    </citation>
    <scope>NUCLEOTIDE SEQUENCE [MRNA]</scope>
    <scope>VARIANT MET-331</scope>
    <source>
        <tissue>Testis</tissue>
    </source>
</reference>
<reference key="4">
    <citation type="journal article" date="2001" name="Nature">
        <title>The DNA sequence and comparative analysis of human chromosome 20.</title>
        <authorList>
            <person name="Deloukas P."/>
            <person name="Matthews L.H."/>
            <person name="Ashurst J.L."/>
            <person name="Burton J."/>
            <person name="Gilbert J.G.R."/>
            <person name="Jones M."/>
            <person name="Stavrides G."/>
            <person name="Almeida J.P."/>
            <person name="Babbage A.K."/>
            <person name="Bagguley C.L."/>
            <person name="Bailey J."/>
            <person name="Barlow K.F."/>
            <person name="Bates K.N."/>
            <person name="Beard L.M."/>
            <person name="Beare D.M."/>
            <person name="Beasley O.P."/>
            <person name="Bird C.P."/>
            <person name="Blakey S.E."/>
            <person name="Bridgeman A.M."/>
            <person name="Brown A.J."/>
            <person name="Buck D."/>
            <person name="Burrill W.D."/>
            <person name="Butler A.P."/>
            <person name="Carder C."/>
            <person name="Carter N.P."/>
            <person name="Chapman J.C."/>
            <person name="Clamp M."/>
            <person name="Clark G."/>
            <person name="Clark L.N."/>
            <person name="Clark S.Y."/>
            <person name="Clee C.M."/>
            <person name="Clegg S."/>
            <person name="Cobley V.E."/>
            <person name="Collier R.E."/>
            <person name="Connor R.E."/>
            <person name="Corby N.R."/>
            <person name="Coulson A."/>
            <person name="Coville G.J."/>
            <person name="Deadman R."/>
            <person name="Dhami P.D."/>
            <person name="Dunn M."/>
            <person name="Ellington A.G."/>
            <person name="Frankland J.A."/>
            <person name="Fraser A."/>
            <person name="French L."/>
            <person name="Garner P."/>
            <person name="Grafham D.V."/>
            <person name="Griffiths C."/>
            <person name="Griffiths M.N.D."/>
            <person name="Gwilliam R."/>
            <person name="Hall R.E."/>
            <person name="Hammond S."/>
            <person name="Harley J.L."/>
            <person name="Heath P.D."/>
            <person name="Ho S."/>
            <person name="Holden J.L."/>
            <person name="Howden P.J."/>
            <person name="Huckle E."/>
            <person name="Hunt A.R."/>
            <person name="Hunt S.E."/>
            <person name="Jekosch K."/>
            <person name="Johnson C.M."/>
            <person name="Johnson D."/>
            <person name="Kay M.P."/>
            <person name="Kimberley A.M."/>
            <person name="King A."/>
            <person name="Knights A."/>
            <person name="Laird G.K."/>
            <person name="Lawlor S."/>
            <person name="Lehvaeslaiho M.H."/>
            <person name="Leversha M.A."/>
            <person name="Lloyd C."/>
            <person name="Lloyd D.M."/>
            <person name="Lovell J.D."/>
            <person name="Marsh V.L."/>
            <person name="Martin S.L."/>
            <person name="McConnachie L.J."/>
            <person name="McLay K."/>
            <person name="McMurray A.A."/>
            <person name="Milne S.A."/>
            <person name="Mistry D."/>
            <person name="Moore M.J.F."/>
            <person name="Mullikin J.C."/>
            <person name="Nickerson T."/>
            <person name="Oliver K."/>
            <person name="Parker A."/>
            <person name="Patel R."/>
            <person name="Pearce T.A.V."/>
            <person name="Peck A.I."/>
            <person name="Phillimore B.J.C.T."/>
            <person name="Prathalingam S.R."/>
            <person name="Plumb R.W."/>
            <person name="Ramsay H."/>
            <person name="Rice C.M."/>
            <person name="Ross M.T."/>
            <person name="Scott C.E."/>
            <person name="Sehra H.K."/>
            <person name="Shownkeen R."/>
            <person name="Sims S."/>
            <person name="Skuce C.D."/>
            <person name="Smith M.L."/>
            <person name="Soderlund C."/>
            <person name="Steward C.A."/>
            <person name="Sulston J.E."/>
            <person name="Swann R.M."/>
            <person name="Sycamore N."/>
            <person name="Taylor R."/>
            <person name="Tee L."/>
            <person name="Thomas D.W."/>
            <person name="Thorpe A."/>
            <person name="Tracey A."/>
            <person name="Tromans A.C."/>
            <person name="Vaudin M."/>
            <person name="Wall M."/>
            <person name="Wallis J.M."/>
            <person name="Whitehead S.L."/>
            <person name="Whittaker P."/>
            <person name="Willey D.L."/>
            <person name="Williams L."/>
            <person name="Williams S.A."/>
            <person name="Wilming L."/>
            <person name="Wray P.W."/>
            <person name="Hubbard T."/>
            <person name="Durbin R.M."/>
            <person name="Bentley D.R."/>
            <person name="Beck S."/>
            <person name="Rogers J."/>
        </authorList>
    </citation>
    <scope>NUCLEOTIDE SEQUENCE [LARGE SCALE GENOMIC DNA]</scope>
</reference>
<reference key="5">
    <citation type="journal article" date="2004" name="Genome Res.">
        <title>The status, quality, and expansion of the NIH full-length cDNA project: the Mammalian Gene Collection (MGC).</title>
        <authorList>
            <consortium name="The MGC Project Team"/>
        </authorList>
    </citation>
    <scope>NUCLEOTIDE SEQUENCE [LARGE SCALE MRNA]</scope>
    <source>
        <tissue>Brain</tissue>
    </source>
</reference>
<reference key="6">
    <citation type="journal article" date="2011" name="Cell. Mol. Life Sci.">
        <title>Evidence that prokineticin receptor 2 exists as a dimer in vivo.</title>
        <authorList>
            <person name="Marsango S."/>
            <person name="Bonaccorsi di Patti M.C."/>
            <person name="Barra D."/>
            <person name="Miele R."/>
        </authorList>
    </citation>
    <scope>SUBUNIT</scope>
</reference>
<reference key="7">
    <citation type="journal article" date="2006" name="PLoS Genet.">
        <title>Kallmann syndrome: mutations in the genes encoding prokineticin-2 and prokineticin receptor-2.</title>
        <authorList>
            <person name="Dode C."/>
            <person name="Teixeira L."/>
            <person name="Levilliers J."/>
            <person name="Fouveaut C."/>
            <person name="Bouchard P."/>
            <person name="Kottler M.-L."/>
            <person name="Lespinasse J."/>
            <person name="Lienhardt-Roussie A."/>
            <person name="Mathieu M."/>
            <person name="Moerman A."/>
            <person name="Morgan G."/>
            <person name="Murat A."/>
            <person name="Toublanc J.-E."/>
            <person name="Wolczynski S."/>
            <person name="Delpech M."/>
            <person name="Petit C."/>
            <person name="Young J."/>
            <person name="Hardelin J.-P."/>
        </authorList>
    </citation>
    <scope>VARIANTS HH3 CYS-85; HIS-85; GLN-164; ARG-173; SER-178; ARG-210; CYS-268; SER-290; ILE-323 AND MET-331</scope>
    <scope>VARIANT MET-335</scope>
</reference>
<reference key="8">
    <citation type="journal article" date="2008" name="J. Clin. Endocrinol. Metab.">
        <title>Mutations in prokineticin 2 and prokineticin receptor 2 genes in human gonadotrophin-releasing hormone deficiency: molecular genetics and clinical spectrum.</title>
        <authorList>
            <person name="Cole L.W."/>
            <person name="Sidis Y."/>
            <person name="Zhang C."/>
            <person name="Quinton R."/>
            <person name="Plummer L."/>
            <person name="Pignatelli D."/>
            <person name="Hughes V.A."/>
            <person name="Dwyer A.A."/>
            <person name="Raivio T."/>
            <person name="Hayes F.J."/>
            <person name="Seminara S.B."/>
            <person name="Huot C."/>
            <person name="Alos N."/>
            <person name="Speiser P."/>
            <person name="Takeshita A."/>
            <person name="Van Vliet G."/>
            <person name="Pearce S."/>
            <person name="Crowley W.F. Jr."/>
            <person name="Zhou Q.Y."/>
            <person name="Pitteloud N."/>
        </authorList>
    </citation>
    <scope>VARIANTS HH3 CYS-85; HIS-113; MET-115; GLN-164; ARG-173; SER-178; LEU-188; GLN-248; MET-331 AND TRP-357</scope>
    <scope>CHARACTERIZATION OF VARIANTS HH3 CYS-85; HIS-113; MET-115; GLN-164; ARG-173; SER-178; LEU-188; GLN-248; MET-331 AND TRP-357</scope>
</reference>
<reference key="9">
    <citation type="journal article" date="2009" name="Hum. Mol. Genet.">
        <title>PROKR2 missense mutations associated with Kallmann syndrome impair receptor signalling activity.</title>
        <authorList>
            <person name="Monnier C."/>
            <person name="Dode C."/>
            <person name="Fabre L."/>
            <person name="Teixeira L."/>
            <person name="Labesse G."/>
            <person name="Pin J.P."/>
            <person name="Hardelin J.P."/>
            <person name="Rondard P."/>
        </authorList>
    </citation>
    <scope>CHARACTERIZATION OF VARIANTS HH3 CYS-85; HIS-85; GLN-164; ARG-173; SER-178; ARG-210; CYS-268; SER-290; ILE-323 AND MET-331</scope>
    <scope>SUBCELLULAR LOCATION</scope>
</reference>
<reference key="10">
    <citation type="journal article" date="2012" name="PLoS Genet.">
        <title>SEMA3A, a gene involved in axonal pathfinding, is mutated in patients with Kallmann syndrome.</title>
        <authorList>
            <person name="Hanchate N.K."/>
            <person name="Giacobini P."/>
            <person name="Lhuillier P."/>
            <person name="Parkash J."/>
            <person name="Espy C."/>
            <person name="Fouveaut C."/>
            <person name="Leroy C."/>
            <person name="Baron S."/>
            <person name="Campagne C."/>
            <person name="Vanacker C."/>
            <person name="Collier F."/>
            <person name="Cruaud C."/>
            <person name="Meyer V."/>
            <person name="Garcia-Pinero A."/>
            <person name="Dewailly D."/>
            <person name="Cortet-Rudelli C."/>
            <person name="Gersak K."/>
            <person name="Metz C."/>
            <person name="Chabrier G."/>
            <person name="Pugeat M."/>
            <person name="Young J."/>
            <person name="Hardelin J.P."/>
            <person name="Prevot V."/>
            <person name="Dode C."/>
        </authorList>
    </citation>
    <scope>VARIANT HH3 CYS-268</scope>
</reference>
<reference key="11">
    <citation type="journal article" date="2013" name="Am. J. Hum. Genet.">
        <title>Mutations in FGF17, IL17RD, DUSP6, SPRY4, and FLRT3 are identified in individuals with congenital hypogonadotropic hypogonadism.</title>
        <authorList>
            <person name="Miraoui H."/>
            <person name="Dwyer A.A."/>
            <person name="Sykiotis G.P."/>
            <person name="Plummer L."/>
            <person name="Chung W."/>
            <person name="Feng B."/>
            <person name="Beenken A."/>
            <person name="Clarke J."/>
            <person name="Pers T.H."/>
            <person name="Dworzynski P."/>
            <person name="Keefe K."/>
            <person name="Niedziela M."/>
            <person name="Raivio T."/>
            <person name="Crowley W.F. Jr."/>
            <person name="Seminara S.B."/>
            <person name="Quinton R."/>
            <person name="Hughes V.A."/>
            <person name="Kumanov P."/>
            <person name="Young J."/>
            <person name="Yialamas M.A."/>
            <person name="Hall J.E."/>
            <person name="Van Vliet G."/>
            <person name="Chanoine J.P."/>
            <person name="Rubenstein J."/>
            <person name="Mohammadi M."/>
            <person name="Tsai P.S."/>
            <person name="Sidis Y."/>
            <person name="Lage K."/>
            <person name="Pitteloud N."/>
        </authorList>
    </citation>
    <scope>VARIANTS HH3 MET-115 AND GLY-202</scope>
</reference>
<reference key="12">
    <citation type="journal article" date="2014" name="J. Clin. Endocrinol. Metab.">
        <title>The prevalence of CHD7 missense versus truncating mutations is higher in patients with Kallmann syndrome than in typical CHARGE patients.</title>
        <authorList>
            <person name="Marcos S."/>
            <person name="Sarfati J."/>
            <person name="Leroy C."/>
            <person name="Fouveaut C."/>
            <person name="Parent P."/>
            <person name="Metz C."/>
            <person name="Wolczynski S."/>
            <person name="Gerard M."/>
            <person name="Bieth E."/>
            <person name="Kurtz F."/>
            <person name="Verier-Mine O."/>
            <person name="Perrin L."/>
            <person name="Archambeaud F."/>
            <person name="Cabrol S."/>
            <person name="Rodien P."/>
            <person name="Hove H."/>
            <person name="Prescott T."/>
            <person name="Lacombe D."/>
            <person name="Christin-Maitre S."/>
            <person name="Touraine P."/>
            <person name="Hieronimus S."/>
            <person name="Dewailly D."/>
            <person name="Young J."/>
            <person name="Pugeat M."/>
            <person name="Hardelin J.P."/>
            <person name="Dode C."/>
        </authorList>
    </citation>
    <scope>VARIANTS HH3 CYS-85; HIS-85; ILE-158; ARG-173; SER-290 AND MET-334</scope>
</reference>
<reference key="13">
    <citation type="journal article" date="2017" name="Medicine (Baltimore)">
        <title>Kallmann syndrome with a Tyr113His PROKR2 mutation.</title>
        <authorList>
            <person name="Ha J.H."/>
            <person name="Lee S."/>
            <person name="Kim Y."/>
            <person name="Moon J.I."/>
            <person name="Seo J."/>
            <person name="Jang J.H."/>
            <person name="Cho E.H."/>
            <person name="Kim J.M."/>
            <person name="Rhee B.D."/>
            <person name="Ko K.S."/>
            <person name="Yoo S.J."/>
            <person name="Won J.C."/>
        </authorList>
    </citation>
    <scope>VARIANT HH3 HIS-113</scope>
</reference>
<comment type="function">
    <text>Receptor for prokineticin 2. Exclusively coupled to the G(q) subclass of heteromeric G proteins. Activation leads to mobilization of calcium, stimulation of phosphoinositide turnover and activation of p44/p42 mitogen-activated protein kinase.</text>
</comment>
<comment type="subunit">
    <text evidence="6">Homodimer.</text>
</comment>
<comment type="interaction">
    <interactant intactId="EBI-12902928">
        <id>Q8NFJ6</id>
    </interactant>
    <interactant intactId="EBI-10827839">
        <id>Q15848</id>
        <label>ADIPOQ</label>
    </interactant>
    <organismsDiffer>false</organismsDiffer>
    <experiments>3</experiments>
</comment>
<comment type="interaction">
    <interactant intactId="EBI-12902928">
        <id>Q8NFJ6</id>
    </interactant>
    <interactant intactId="EBI-12142257">
        <id>Q8TBE3</id>
        <label>FNDC9</label>
    </interactant>
    <organismsDiffer>false</organismsDiffer>
    <experiments>3</experiments>
</comment>
<comment type="interaction">
    <interactant intactId="EBI-12902928">
        <id>Q8NFJ6</id>
    </interactant>
    <interactant intactId="EBI-17458373">
        <id>P48165</id>
        <label>GJA8</label>
    </interactant>
    <organismsDiffer>false</organismsDiffer>
    <experiments>3</experiments>
</comment>
<comment type="interaction">
    <interactant intactId="EBI-12902928">
        <id>Q8NFJ6</id>
    </interactant>
    <interactant intactId="EBI-720480">
        <id>P24593</id>
        <label>IGFBP5</label>
    </interactant>
    <organismsDiffer>false</organismsDiffer>
    <experiments>3</experiments>
</comment>
<comment type="interaction">
    <interactant intactId="EBI-12902928">
        <id>Q8NFJ6</id>
    </interactant>
    <interactant intactId="EBI-988826">
        <id>Q9Y385</id>
        <label>UBE2J1</label>
    </interactant>
    <organismsDiffer>false</organismsDiffer>
    <experiments>3</experiments>
</comment>
<comment type="subcellular location">
    <subcellularLocation>
        <location evidence="5">Cell membrane</location>
        <topology>Multi-pass membrane protein</topology>
    </subcellularLocation>
</comment>
<comment type="tissue specificity">
    <text>Expressed in the ileocecum, thyroid gland, pituitary gland, salivary gland, adrenal gland, testis, ovary and brain.</text>
</comment>
<comment type="disease" evidence="3 4 5 7 8 9">
    <disease id="DI-00619">
        <name>Hypogonadotropic hypogonadism 3 with or without anosmia</name>
        <acronym>HH3</acronym>
        <description>A disorder characterized by absent or incomplete sexual maturation by the age of 18 years, in conjunction with low levels of circulating gonadotropins and testosterone and no other abnormalities of the hypothalamic-pituitary axis. In some cases, it is associated with non-reproductive phenotypes, such as anosmia, cleft palate, and sensorineural hearing loss. Anosmia or hyposmia is related to the absence or hypoplasia of the olfactory bulbs and tracts. Hypogonadism is due to deficiency in gonadotropin-releasing hormone and probably results from a failure of embryonic migration of gonadotropin-releasing hormone-synthesizing neurons. In the presence of anosmia, idiopathic hypogonadotropic hypogonadism is referred to as Kallmann syndrome, whereas in the presence of a normal sense of smell, it has been termed normosmic idiopathic hypogonadotropic hypogonadism (nIHH).</description>
        <dbReference type="MIM" id="244200"/>
    </disease>
    <text evidence="3 7 8 10">The disease is caused by variants affecting distinct genetic loci, including the gene represented in this entry. The genetics of hypogonadotropic hypogonadism involves various modes of transmission. Oligogenic inheritance has been reported in some patients carrying mutations in PROKR2 as well as in other HH-associated genes including KAL1, SEMA3A, PROK2, GNRH1 and FGFR1 (PubMed:17054399, PubMed:22927827, PubMed:23643382).</text>
</comment>
<comment type="similarity">
    <text evidence="2">Belongs to the G-protein coupled receptor 1 family.</text>
</comment>
<evidence type="ECO:0000255" key="1"/>
<evidence type="ECO:0000255" key="2">
    <source>
        <dbReference type="PROSITE-ProRule" id="PRU00521"/>
    </source>
</evidence>
<evidence type="ECO:0000269" key="3">
    <source>
    </source>
</evidence>
<evidence type="ECO:0000269" key="4">
    <source>
    </source>
</evidence>
<evidence type="ECO:0000269" key="5">
    <source>
    </source>
</evidence>
<evidence type="ECO:0000269" key="6">
    <source>
    </source>
</evidence>
<evidence type="ECO:0000269" key="7">
    <source>
    </source>
</evidence>
<evidence type="ECO:0000269" key="8">
    <source>
    </source>
</evidence>
<evidence type="ECO:0000269" key="9">
    <source>
    </source>
</evidence>
<evidence type="ECO:0000269" key="10">
    <source>
    </source>
</evidence>
<evidence type="ECO:0000269" key="11">
    <source ref="3"/>
</evidence>
<sequence>MAAQNGNTSFTPNFNPPQDHASSLSFNFSYGDYDLPMDEDEDMTKTRTFFAAKIVIGIALAGIMLVCGIGNFVFIAALTRYKKLRNLTNLLIANLAISDFLVAIICCPFEMDYYVVRQLSWEHGHVLCASVNYLRTVSLYVSTNALLAIAIDRYLAIVHPLKPRMNYQTASFLIALVWMVSILIAIPSAYFATETVLFIVKSQEKIFCGQIWPVDQQLYYKSYFLFIFGVEFVGPVVTMTLCYARISRELWFKAVPGFQTEQIRKRLRCRRKTVLVLMCILTAYVLCWAPFYGFTIVRDFFPTVFVKEKHYLTAFYVVECIAMSNSMINTVCFVTVKNNTMKYFKKMMLLHWRPSQRGSKSSADLDLRTNGVPTTEEVDCIRLK</sequence>
<name>PKR2_HUMAN</name>
<gene>
    <name type="primary">PROKR2</name>
    <name type="synonym">GPR73L1</name>
    <name type="synonym">PKR2</name>
</gene>
<dbReference type="EMBL" id="AF506288">
    <property type="protein sequence ID" value="AAM48128.1"/>
    <property type="molecule type" value="mRNA"/>
</dbReference>
<dbReference type="EMBL" id="AB084081">
    <property type="protein sequence ID" value="BAC24022.1"/>
    <property type="molecule type" value="mRNA"/>
</dbReference>
<dbReference type="EMBL" id="EF577398">
    <property type="protein sequence ID" value="ABQ52418.1"/>
    <property type="molecule type" value="mRNA"/>
</dbReference>
<dbReference type="EMBL" id="AL121755">
    <property type="status" value="NOT_ANNOTATED_CDS"/>
    <property type="molecule type" value="Genomic_DNA"/>
</dbReference>
<dbReference type="EMBL" id="BC104959">
    <property type="protein sequence ID" value="AAI04960.1"/>
    <property type="molecule type" value="mRNA"/>
</dbReference>
<dbReference type="EMBL" id="BC104961">
    <property type="protein sequence ID" value="AAI04962.1"/>
    <property type="molecule type" value="mRNA"/>
</dbReference>
<dbReference type="CCDS" id="CCDS13089.1"/>
<dbReference type="RefSeq" id="NP_658986.1">
    <property type="nucleotide sequence ID" value="NM_144773.4"/>
</dbReference>
<dbReference type="RefSeq" id="XP_016883135.1">
    <property type="nucleotide sequence ID" value="XM_017027646.2"/>
</dbReference>
<dbReference type="RefSeq" id="XP_054178940.1">
    <property type="nucleotide sequence ID" value="XM_054322965.1"/>
</dbReference>
<dbReference type="SMR" id="Q8NFJ6"/>
<dbReference type="BioGRID" id="126143">
    <property type="interactions" value="7"/>
</dbReference>
<dbReference type="FunCoup" id="Q8NFJ6">
    <property type="interactions" value="627"/>
</dbReference>
<dbReference type="IntAct" id="Q8NFJ6">
    <property type="interactions" value="5"/>
</dbReference>
<dbReference type="STRING" id="9606.ENSP00000217270"/>
<dbReference type="BindingDB" id="Q8NFJ6"/>
<dbReference type="ChEMBL" id="CHEMBL5548"/>
<dbReference type="GuidetoPHARMACOLOGY" id="336"/>
<dbReference type="GlyCosmos" id="Q8NFJ6">
    <property type="glycosylation" value="2 sites, No reported glycans"/>
</dbReference>
<dbReference type="GlyGen" id="Q8NFJ6">
    <property type="glycosylation" value="2 sites"/>
</dbReference>
<dbReference type="iPTMnet" id="Q8NFJ6"/>
<dbReference type="PhosphoSitePlus" id="Q8NFJ6"/>
<dbReference type="BioMuta" id="PROKR2"/>
<dbReference type="DMDM" id="33112425"/>
<dbReference type="MassIVE" id="Q8NFJ6"/>
<dbReference type="PaxDb" id="9606-ENSP00000217270"/>
<dbReference type="PeptideAtlas" id="Q8NFJ6"/>
<dbReference type="ProteomicsDB" id="73317"/>
<dbReference type="Antibodypedia" id="8176">
    <property type="antibodies" value="236 antibodies from 32 providers"/>
</dbReference>
<dbReference type="DNASU" id="128674"/>
<dbReference type="Ensembl" id="ENST00000217270.4">
    <property type="protein sequence ID" value="ENSP00000217270.3"/>
    <property type="gene ID" value="ENSG00000101292.8"/>
</dbReference>
<dbReference type="Ensembl" id="ENST00000678254.1">
    <property type="protein sequence ID" value="ENSP00000504128.1"/>
    <property type="gene ID" value="ENSG00000101292.8"/>
</dbReference>
<dbReference type="GeneID" id="128674"/>
<dbReference type="KEGG" id="hsa:128674"/>
<dbReference type="MANE-Select" id="ENST00000678254.1">
    <property type="protein sequence ID" value="ENSP00000504128.1"/>
    <property type="RefSeq nucleotide sequence ID" value="NM_144773.4"/>
    <property type="RefSeq protein sequence ID" value="NP_658986.1"/>
</dbReference>
<dbReference type="UCSC" id="uc010zqw.3">
    <property type="organism name" value="human"/>
</dbReference>
<dbReference type="AGR" id="HGNC:15836"/>
<dbReference type="CTD" id="128674"/>
<dbReference type="DisGeNET" id="128674"/>
<dbReference type="GeneCards" id="PROKR2"/>
<dbReference type="GeneReviews" id="PROKR2"/>
<dbReference type="HGNC" id="HGNC:15836">
    <property type="gene designation" value="PROKR2"/>
</dbReference>
<dbReference type="HPA" id="ENSG00000101292">
    <property type="expression patterns" value="Tissue enhanced (brain)"/>
</dbReference>
<dbReference type="MalaCards" id="PROKR2"/>
<dbReference type="MIM" id="244200">
    <property type="type" value="phenotype"/>
</dbReference>
<dbReference type="MIM" id="607123">
    <property type="type" value="gene"/>
</dbReference>
<dbReference type="neXtProt" id="NX_Q8NFJ6"/>
<dbReference type="OpenTargets" id="ENSG00000101292"/>
<dbReference type="Orphanet" id="478">
    <property type="disease" value="Kallmann syndrome"/>
</dbReference>
<dbReference type="Orphanet" id="432">
    <property type="disease" value="Normosmic congenital hypogonadotropic hypogonadism"/>
</dbReference>
<dbReference type="Orphanet" id="95496">
    <property type="disease" value="Pituitary stalk interruption syndrome"/>
</dbReference>
<dbReference type="Orphanet" id="3157">
    <property type="disease" value="Septo-optic dysplasia spectrum"/>
</dbReference>
<dbReference type="PharmGKB" id="PA30014"/>
<dbReference type="VEuPathDB" id="HostDB:ENSG00000101292"/>
<dbReference type="eggNOG" id="KOG3656">
    <property type="taxonomic scope" value="Eukaryota"/>
</dbReference>
<dbReference type="GeneTree" id="ENSGT00940000154544"/>
<dbReference type="HOGENOM" id="CLU_009579_6_0_1"/>
<dbReference type="InParanoid" id="Q8NFJ6"/>
<dbReference type="OMA" id="YPHGGTT"/>
<dbReference type="OrthoDB" id="10053194at2759"/>
<dbReference type="PAN-GO" id="Q8NFJ6">
    <property type="GO annotations" value="4 GO annotations based on evolutionary models"/>
</dbReference>
<dbReference type="PhylomeDB" id="Q8NFJ6"/>
<dbReference type="TreeFam" id="TF315303"/>
<dbReference type="PathwayCommons" id="Q8NFJ6"/>
<dbReference type="Reactome" id="R-HSA-375276">
    <property type="pathway name" value="Peptide ligand-binding receptors"/>
</dbReference>
<dbReference type="Reactome" id="R-HSA-416476">
    <property type="pathway name" value="G alpha (q) signalling events"/>
</dbReference>
<dbReference type="SignaLink" id="Q8NFJ6"/>
<dbReference type="SIGNOR" id="Q8NFJ6"/>
<dbReference type="BioGRID-ORCS" id="128674">
    <property type="hits" value="19 hits in 1145 CRISPR screens"/>
</dbReference>
<dbReference type="GeneWiki" id="Prokineticin_receptor_2"/>
<dbReference type="GenomeRNAi" id="128674"/>
<dbReference type="Pharos" id="Q8NFJ6">
    <property type="development level" value="Tchem"/>
</dbReference>
<dbReference type="PRO" id="PR:Q8NFJ6"/>
<dbReference type="Proteomes" id="UP000005640">
    <property type="component" value="Chromosome 20"/>
</dbReference>
<dbReference type="RNAct" id="Q8NFJ6">
    <property type="molecule type" value="protein"/>
</dbReference>
<dbReference type="Bgee" id="ENSG00000101292">
    <property type="expression patterns" value="Expressed in cortical plate and 20 other cell types or tissues"/>
</dbReference>
<dbReference type="GO" id="GO:0005886">
    <property type="term" value="C:plasma membrane"/>
    <property type="evidence" value="ECO:0000314"/>
    <property type="project" value="UniProtKB"/>
</dbReference>
<dbReference type="GO" id="GO:0004930">
    <property type="term" value="F:G protein-coupled receptor activity"/>
    <property type="evidence" value="ECO:0000318"/>
    <property type="project" value="GO_Central"/>
</dbReference>
<dbReference type="GO" id="GO:0004983">
    <property type="term" value="F:neuropeptide Y receptor activity"/>
    <property type="evidence" value="ECO:0007669"/>
    <property type="project" value="InterPro"/>
</dbReference>
<dbReference type="GO" id="GO:0032870">
    <property type="term" value="P:cellular response to hormone stimulus"/>
    <property type="evidence" value="ECO:0000318"/>
    <property type="project" value="GO_Central"/>
</dbReference>
<dbReference type="GO" id="GO:0007623">
    <property type="term" value="P:circadian rhythm"/>
    <property type="evidence" value="ECO:0000318"/>
    <property type="project" value="GO_Central"/>
</dbReference>
<dbReference type="GO" id="GO:0007186">
    <property type="term" value="P:G protein-coupled receptor signaling pathway"/>
    <property type="evidence" value="ECO:0000318"/>
    <property type="project" value="GO_Central"/>
</dbReference>
<dbReference type="CDD" id="cd15204">
    <property type="entry name" value="7tmA_prokineticin-R"/>
    <property type="match status" value="1"/>
</dbReference>
<dbReference type="FunFam" id="1.20.1070.10:FF:000069">
    <property type="entry name" value="Prokineticin receptor 2"/>
    <property type="match status" value="1"/>
</dbReference>
<dbReference type="Gene3D" id="1.20.1070.10">
    <property type="entry name" value="Rhodopsin 7-helix transmembrane proteins"/>
    <property type="match status" value="1"/>
</dbReference>
<dbReference type="InterPro" id="IPR000276">
    <property type="entry name" value="GPCR_Rhodpsn"/>
</dbReference>
<dbReference type="InterPro" id="IPR017452">
    <property type="entry name" value="GPCR_Rhodpsn_7TM"/>
</dbReference>
<dbReference type="InterPro" id="IPR000611">
    <property type="entry name" value="NPY_rcpt"/>
</dbReference>
<dbReference type="PANTHER" id="PTHR24238">
    <property type="entry name" value="G-PROTEIN COUPLED RECEPTOR"/>
    <property type="match status" value="1"/>
</dbReference>
<dbReference type="PANTHER" id="PTHR24238:SF74">
    <property type="entry name" value="PROKINETICIN RECEPTOR 2"/>
    <property type="match status" value="1"/>
</dbReference>
<dbReference type="Pfam" id="PF00001">
    <property type="entry name" value="7tm_1"/>
    <property type="match status" value="1"/>
</dbReference>
<dbReference type="PRINTS" id="PR00237">
    <property type="entry name" value="GPCRRHODOPSN"/>
</dbReference>
<dbReference type="PRINTS" id="PR01012">
    <property type="entry name" value="NRPEPTIDEYR"/>
</dbReference>
<dbReference type="SUPFAM" id="SSF81321">
    <property type="entry name" value="Family A G protein-coupled receptor-like"/>
    <property type="match status" value="1"/>
</dbReference>
<dbReference type="PROSITE" id="PS00237">
    <property type="entry name" value="G_PROTEIN_RECEP_F1_1"/>
    <property type="match status" value="1"/>
</dbReference>
<dbReference type="PROSITE" id="PS50262">
    <property type="entry name" value="G_PROTEIN_RECEP_F1_2"/>
    <property type="match status" value="1"/>
</dbReference>
<organism>
    <name type="scientific">Homo sapiens</name>
    <name type="common">Human</name>
    <dbReference type="NCBI Taxonomy" id="9606"/>
    <lineage>
        <taxon>Eukaryota</taxon>
        <taxon>Metazoa</taxon>
        <taxon>Chordata</taxon>
        <taxon>Craniata</taxon>
        <taxon>Vertebrata</taxon>
        <taxon>Euteleostomi</taxon>
        <taxon>Mammalia</taxon>
        <taxon>Eutheria</taxon>
        <taxon>Euarchontoglires</taxon>
        <taxon>Primates</taxon>
        <taxon>Haplorrhini</taxon>
        <taxon>Catarrhini</taxon>
        <taxon>Hominidae</taxon>
        <taxon>Homo</taxon>
    </lineage>
</organism>
<keyword id="KW-1003">Cell membrane</keyword>
<keyword id="KW-0225">Disease variant</keyword>
<keyword id="KW-1015">Disulfide bond</keyword>
<keyword id="KW-0297">G-protein coupled receptor</keyword>
<keyword id="KW-0325">Glycoprotein</keyword>
<keyword id="KW-1016">Hypogonadotropic hypogonadism</keyword>
<keyword id="KW-0956">Kallmann syndrome</keyword>
<keyword id="KW-0472">Membrane</keyword>
<keyword id="KW-0675">Receptor</keyword>
<keyword id="KW-1185">Reference proteome</keyword>
<keyword id="KW-0807">Transducer</keyword>
<keyword id="KW-0812">Transmembrane</keyword>
<keyword id="KW-1133">Transmembrane helix</keyword>
<protein>
    <recommendedName>
        <fullName>Prokineticin receptor 2</fullName>
        <shortName>PK-R2</shortName>
    </recommendedName>
    <alternativeName>
        <fullName>G-protein coupled receptor 73-like 1</fullName>
    </alternativeName>
    <alternativeName>
        <fullName>G-protein coupled receptor I5E</fullName>
    </alternativeName>
    <alternativeName>
        <fullName>GPR73b</fullName>
    </alternativeName>
    <alternativeName>
        <fullName>GPRg2</fullName>
    </alternativeName>
</protein>
<feature type="chain" id="PRO_0000070083" description="Prokineticin receptor 2">
    <location>
        <begin position="1"/>
        <end position="384"/>
    </location>
</feature>
<feature type="topological domain" description="Extracellular" evidence="1">
    <location>
        <begin position="1"/>
        <end position="54"/>
    </location>
</feature>
<feature type="transmembrane region" description="Helical; Name=1" evidence="1">
    <location>
        <begin position="55"/>
        <end position="75"/>
    </location>
</feature>
<feature type="topological domain" description="Cytoplasmic" evidence="1">
    <location>
        <begin position="76"/>
        <end position="89"/>
    </location>
</feature>
<feature type="transmembrane region" description="Helical; Name=2" evidence="1">
    <location>
        <begin position="90"/>
        <end position="110"/>
    </location>
</feature>
<feature type="topological domain" description="Extracellular" evidence="1">
    <location>
        <begin position="111"/>
        <end position="136"/>
    </location>
</feature>
<feature type="transmembrane region" description="Helical; Name=3" evidence="1">
    <location>
        <begin position="137"/>
        <end position="157"/>
    </location>
</feature>
<feature type="topological domain" description="Cytoplasmic" evidence="1">
    <location>
        <begin position="158"/>
        <end position="171"/>
    </location>
</feature>
<feature type="transmembrane region" description="Helical; Name=4" evidence="1">
    <location>
        <begin position="172"/>
        <end position="192"/>
    </location>
</feature>
<feature type="topological domain" description="Extracellular" evidence="1">
    <location>
        <begin position="193"/>
        <end position="223"/>
    </location>
</feature>
<feature type="transmembrane region" description="Helical; Name=5" evidence="1">
    <location>
        <begin position="224"/>
        <end position="244"/>
    </location>
</feature>
<feature type="topological domain" description="Cytoplasmic" evidence="1">
    <location>
        <begin position="245"/>
        <end position="273"/>
    </location>
</feature>
<feature type="transmembrane region" description="Helical; Name=6" evidence="1">
    <location>
        <begin position="274"/>
        <end position="294"/>
    </location>
</feature>
<feature type="topological domain" description="Extracellular" evidence="1">
    <location>
        <begin position="295"/>
        <end position="313"/>
    </location>
</feature>
<feature type="transmembrane region" description="Helical; Name=7" evidence="1">
    <location>
        <begin position="314"/>
        <end position="334"/>
    </location>
</feature>
<feature type="topological domain" description="Cytoplasmic" evidence="1">
    <location>
        <begin position="335"/>
        <end position="384"/>
    </location>
</feature>
<feature type="glycosylation site" description="N-linked (GlcNAc...) asparagine" evidence="1">
    <location>
        <position position="7"/>
    </location>
</feature>
<feature type="glycosylation site" description="N-linked (GlcNAc...) asparagine" evidence="1">
    <location>
        <position position="27"/>
    </location>
</feature>
<feature type="disulfide bond" evidence="2">
    <location>
        <begin position="128"/>
        <end position="208"/>
    </location>
</feature>
<feature type="sequence variant" id="VAR_030957" description="In HH3; phenotype consistent with normosmic idiopathic hypogonadotropic hypogonadism; decreased signaling activity; dbSNP:rs141090506." evidence="3 4 5 9">
    <original>R</original>
    <variation>C</variation>
    <location>
        <position position="85"/>
    </location>
</feature>
<feature type="sequence variant" id="VAR_030958" description="In HH3; decreased signaling activity; dbSNP:rs74315418." evidence="3 5 9">
    <original>R</original>
    <variation>H</variation>
    <location>
        <position position="85"/>
    </location>
</feature>
<feature type="sequence variant" id="VAR_072173" description="In HH3; dbSNP:rs202203360." evidence="4 10">
    <original>Y</original>
    <variation>H</variation>
    <location>
        <position position="113"/>
    </location>
</feature>
<feature type="sequence variant" id="VAR_069964" description="In HH3; phenotype consistent with Kallmann syndrome; dbSNP:rs138672528." evidence="4 8">
    <original>V</original>
    <variation>M</variation>
    <location>
        <position position="115"/>
    </location>
</feature>
<feature type="sequence variant" id="VAR_072978" description="In HH3; phenotype consistent with Kallmann syndrome; dbSNP:rs368732206." evidence="9">
    <original>V</original>
    <variation>I</variation>
    <location>
        <position position="158"/>
    </location>
</feature>
<feature type="sequence variant" id="VAR_030959" description="In HH3; phenotype consistent with Kallmann syndrome; decreased signaling activity; dbSNP:rs751875578." evidence="3 4 5">
    <original>R</original>
    <variation>Q</variation>
    <location>
        <position position="164"/>
    </location>
</feature>
<feature type="sequence variant" id="VAR_030960" description="In HH3; phenotype consistent with Kallmann syndrome; decreased signaling activity; dbSNP:rs74315416." evidence="3 4 5 9">
    <original>L</original>
    <variation>R</variation>
    <location>
        <position position="173"/>
    </location>
</feature>
<feature type="sequence variant" id="VAR_030961" description="In HH3; decreased signaling activity; dbSNP:rs201835496." evidence="3 4 5">
    <original>W</original>
    <variation>S</variation>
    <location>
        <position position="178"/>
    </location>
</feature>
<feature type="sequence variant" id="VAR_072174" description="In HH3; dbSNP:rs376239580." evidence="4">
    <original>S</original>
    <variation>L</variation>
    <location>
        <position position="188"/>
    </location>
</feature>
<feature type="sequence variant" id="VAR_069965" description="In HH3; triallelic inheritance; the patient also carries mutations in GNRH1 and FGFR1; dbSNP:rs200755554." evidence="8">
    <original>S</original>
    <variation>G</variation>
    <location>
        <position position="202"/>
    </location>
</feature>
<feature type="sequence variant" id="VAR_030962" description="In HH3; phenotype consistent with Kallmann syndrome; decreased signaling activity; abolished ligand binding; dbSNP:rs74315417." evidence="3 5">
    <original>Q</original>
    <variation>R</variation>
    <location>
        <position position="210"/>
    </location>
</feature>
<feature type="sequence variant" id="VAR_072175" description="In HH3; dbSNP:rs376142095." evidence="4">
    <original>R</original>
    <variation>Q</variation>
    <location>
        <position position="248"/>
    </location>
</feature>
<feature type="sequence variant" id="VAR_030963" description="In HH3; benign; signaling activity is impaired; dbSNP:rs78861628." evidence="3 5 7">
    <original>R</original>
    <variation>C</variation>
    <location>
        <position position="268"/>
    </location>
</feature>
<feature type="sequence variant" id="VAR_030964" description="In HH3; phenotype consistent with Kallmann syndrome; signaling activity is impaired; impaired cell surface-targeting; dbSNP:rs149992595." evidence="3 5 9">
    <original>P</original>
    <variation>S</variation>
    <location>
        <position position="290"/>
    </location>
</feature>
<feature type="sequence variant" id="VAR_030965" description="In HH3; phenotype consistent with Kallmann syndrome; signaling activity is impaired; dbSNP:rs74315419." evidence="3 5">
    <original>M</original>
    <variation>I</variation>
    <location>
        <position position="323"/>
    </location>
</feature>
<feature type="sequence variant" id="VAR_030966" description="In HH3; likely benign; dbSNP:rs117106081." evidence="3 4 5 11">
    <original>V</original>
    <variation>M</variation>
    <location>
        <position position="331"/>
    </location>
</feature>
<feature type="sequence variant" id="VAR_072979" description="In HH3; phenotype consistent with Kallmann syndrome; dbSNP:rs371564610." evidence="9">
    <original>V</original>
    <variation>M</variation>
    <location>
        <position position="334"/>
    </location>
</feature>
<feature type="sequence variant" id="VAR_030967" description="In dbSNP:rs755562438." evidence="3">
    <original>T</original>
    <variation>M</variation>
    <location>
        <position position="335"/>
    </location>
</feature>
<feature type="sequence variant" id="VAR_072176" description="In HH3; dbSNP:rs375036628." evidence="4">
    <original>R</original>
    <variation>W</variation>
    <location>
        <position position="357"/>
    </location>
</feature>
<accession>Q8NFJ6</accession>
<accession>A5JUU1</accession>
<accession>Q2M3C0</accession>
<accession>Q5TDY1</accession>
<accession>Q9NTT0</accession>
<proteinExistence type="evidence at protein level"/>